<accession>A0A6S5ZZ88</accession>
<dbReference type="EC" id="2.3.3.10"/>
<dbReference type="EMBL" id="LC516401">
    <property type="protein sequence ID" value="BBU37366.1"/>
    <property type="molecule type" value="Genomic_DNA"/>
</dbReference>
<dbReference type="SMR" id="A0A6S5ZZ88"/>
<dbReference type="GO" id="GO:0004421">
    <property type="term" value="F:hydroxymethylglutaryl-CoA synthase activity"/>
    <property type="evidence" value="ECO:0007669"/>
    <property type="project" value="UniProtKB-EC"/>
</dbReference>
<dbReference type="GO" id="GO:0006084">
    <property type="term" value="P:acetyl-CoA metabolic process"/>
    <property type="evidence" value="ECO:0007669"/>
    <property type="project" value="InterPro"/>
</dbReference>
<dbReference type="GO" id="GO:0006696">
    <property type="term" value="P:ergosterol biosynthetic process"/>
    <property type="evidence" value="ECO:0007669"/>
    <property type="project" value="TreeGrafter"/>
</dbReference>
<dbReference type="GO" id="GO:0010142">
    <property type="term" value="P:farnesyl diphosphate biosynthetic process, mevalonate pathway"/>
    <property type="evidence" value="ECO:0007669"/>
    <property type="project" value="InterPro"/>
</dbReference>
<dbReference type="CDD" id="cd00827">
    <property type="entry name" value="init_cond_enzymes"/>
    <property type="match status" value="1"/>
</dbReference>
<dbReference type="FunFam" id="3.40.47.10:FF:000008">
    <property type="entry name" value="3-hydroxy-3-methylglutaryl coenzyme A synthase"/>
    <property type="match status" value="1"/>
</dbReference>
<dbReference type="Gene3D" id="3.40.47.10">
    <property type="match status" value="1"/>
</dbReference>
<dbReference type="InterPro" id="IPR013746">
    <property type="entry name" value="HMG_CoA_synt_C_dom"/>
</dbReference>
<dbReference type="InterPro" id="IPR013528">
    <property type="entry name" value="HMG_CoA_synth_N"/>
</dbReference>
<dbReference type="InterPro" id="IPR010122">
    <property type="entry name" value="HMG_CoA_synthase_euk"/>
</dbReference>
<dbReference type="InterPro" id="IPR016039">
    <property type="entry name" value="Thiolase-like"/>
</dbReference>
<dbReference type="NCBIfam" id="TIGR01833">
    <property type="entry name" value="HMG-CoA-S_euk"/>
    <property type="match status" value="1"/>
</dbReference>
<dbReference type="PANTHER" id="PTHR43323">
    <property type="entry name" value="3-HYDROXY-3-METHYLGLUTARYL COENZYME A SYNTHASE"/>
    <property type="match status" value="1"/>
</dbReference>
<dbReference type="PANTHER" id="PTHR43323:SF2">
    <property type="entry name" value="HYDROXYMETHYLGLUTARYL-COA SYNTHASE"/>
    <property type="match status" value="1"/>
</dbReference>
<dbReference type="Pfam" id="PF08540">
    <property type="entry name" value="HMG_CoA_synt_C"/>
    <property type="match status" value="1"/>
</dbReference>
<dbReference type="Pfam" id="PF01154">
    <property type="entry name" value="HMG_CoA_synt_N"/>
    <property type="match status" value="1"/>
</dbReference>
<dbReference type="SUPFAM" id="SSF53901">
    <property type="entry name" value="Thiolase-like"/>
    <property type="match status" value="2"/>
</dbReference>
<comment type="function">
    <text evidence="4 5">HMG-CoA synthase; part of the gene cluster that mediates the biosynthesis of 1233A, a natural compound known as an inhibitor of HMG-CoA synthase in the mevalonate pathway and with antibacterial and antifungal activities (PubMed:32139880). This enzyme condenses acetyl-CoA with acetoacetyl-CoA to form HMG-CoA, which is the substrate for HMG-CoA reductase (By similarity). As part of the 1233A biosynthesis cluster, is involved in conferring self-resistance to 1233A (PubMed:32139880).</text>
</comment>
<comment type="catalytic activity">
    <reaction evidence="2">
        <text>acetoacetyl-CoA + acetyl-CoA + H2O = (3S)-3-hydroxy-3-methylglutaryl-CoA + CoA + H(+)</text>
        <dbReference type="Rhea" id="RHEA:10188"/>
        <dbReference type="ChEBI" id="CHEBI:15377"/>
        <dbReference type="ChEBI" id="CHEBI:15378"/>
        <dbReference type="ChEBI" id="CHEBI:43074"/>
        <dbReference type="ChEBI" id="CHEBI:57286"/>
        <dbReference type="ChEBI" id="CHEBI:57287"/>
        <dbReference type="ChEBI" id="CHEBI:57288"/>
        <dbReference type="EC" id="2.3.3.10"/>
    </reaction>
    <physiologicalReaction direction="left-to-right" evidence="2">
        <dbReference type="Rhea" id="RHEA:10189"/>
    </physiologicalReaction>
</comment>
<comment type="induction">
    <text evidence="5">Expression is increased upon exposure to hygromycin B.</text>
</comment>
<comment type="disruption phenotype">
    <text evidence="5">Does not affect the ability to produce 1233A and 1233B but leads to increased sensitivity to 1233A.</text>
</comment>
<comment type="similarity">
    <text evidence="7">Belongs to the thiolase-like superfamily. HMG-CoA synthase family.</text>
</comment>
<feature type="chain" id="PRO_0000454630" description="Hydroxymethylglutaryl coenzyme A synthase">
    <location>
        <begin position="1"/>
        <end position="456"/>
    </location>
</feature>
<feature type="active site" description="Proton donor/acceptor" evidence="3">
    <location>
        <position position="85"/>
    </location>
</feature>
<feature type="active site" description="Acyl-thioester intermediate" evidence="3">
    <location>
        <position position="119"/>
    </location>
</feature>
<feature type="active site" description="Proton donor/acceptor" evidence="3">
    <location>
        <position position="258"/>
    </location>
</feature>
<feature type="binding site" evidence="1">
    <location>
        <position position="34"/>
    </location>
    <ligand>
        <name>(3S)-3-hydroxy-3-methylglutaryl-CoA</name>
        <dbReference type="ChEBI" id="CHEBI:43074"/>
    </ligand>
</feature>
<feature type="binding site" evidence="1">
    <location>
        <position position="119"/>
    </location>
    <ligand>
        <name>(3S)-3-hydroxy-3-methylglutaryl-CoA</name>
        <dbReference type="ChEBI" id="CHEBI:43074"/>
    </ligand>
</feature>
<feature type="binding site" evidence="1">
    <location>
        <position position="161"/>
    </location>
    <ligand>
        <name>(3S)-3-hydroxy-3-methylglutaryl-CoA</name>
        <dbReference type="ChEBI" id="CHEBI:43074"/>
    </ligand>
</feature>
<feature type="binding site" evidence="1">
    <location>
        <position position="211"/>
    </location>
    <ligand>
        <name>(3S)-3-hydroxy-3-methylglutaryl-CoA</name>
        <dbReference type="ChEBI" id="CHEBI:43074"/>
    </ligand>
</feature>
<feature type="binding site" evidence="1">
    <location>
        <position position="258"/>
    </location>
    <ligand>
        <name>(3S)-3-hydroxy-3-methylglutaryl-CoA</name>
        <dbReference type="ChEBI" id="CHEBI:43074"/>
    </ligand>
</feature>
<feature type="binding site" evidence="1">
    <location>
        <position position="267"/>
    </location>
    <ligand>
        <name>(3S)-3-hydroxy-3-methylglutaryl-CoA</name>
        <dbReference type="ChEBI" id="CHEBI:43074"/>
    </ligand>
</feature>
<feature type="binding site" evidence="1">
    <location>
        <position position="335"/>
    </location>
    <ligand>
        <name>(3S)-3-hydroxy-3-methylglutaryl-CoA</name>
        <dbReference type="ChEBI" id="CHEBI:43074"/>
    </ligand>
</feature>
<feature type="binding site" evidence="1">
    <location>
        <position position="369"/>
    </location>
    <ligand>
        <name>(3S)-3-hydroxy-3-methylglutaryl-CoA</name>
        <dbReference type="ChEBI" id="CHEBI:43074"/>
    </ligand>
</feature>
<proteinExistence type="evidence at transcript level"/>
<gene>
    <name evidence="6" type="primary">g431</name>
</gene>
<name>G431_FUSSX</name>
<protein>
    <recommendedName>
        <fullName evidence="6">Hydroxymethylglutaryl coenzyme A synthase</fullName>
        <shortName evidence="6">HMG-CoA synthase</shortName>
        <ecNumber>2.3.3.10</ecNumber>
    </recommendedName>
    <alternativeName>
        <fullName evidence="6">1233A biosynthesis cluster protein g431</fullName>
    </alternativeName>
</protein>
<sequence>MTYPQNVGIKAMEIYVPPQCLDQTLFEKHQGVSAGKYTIGLGLQYMNFCTDREDVCSLALTAVSSLLRKFDIDPKSIGRLEVGTESPIDKAKSVKSVLTTLFEPHGNTSLEGIDTIHACYGGTSALFNAVNWVESRSWDGRDAIVVASDIALYKEDASRPTGGAGCVAMLIGPNAVLSLEPSLRGVYMTNTFDFYKPDMKVEFPIVNGHESIACYLGALDECHKDLLRRTEAAKKQLNGDAPKTGKKVLDLFDYMAFHTPNCKLVSKSYGRLKYNDCLNSTNAADWEGIPDELRNLSYKDSLKDKTLERALVAATKTEFKMRVEPCIAAPSLCGNMYTASLYCSLISLISNIDLASAEGKTIGLFSYGSGAASTLFGMRVTGDLTNMVQKIDLMRRLKQRNIQTPEDYEKACALRLKAYGNKSYKPLGDVSSLTPGTYYLKSIDEAYRRTYAIKGQ</sequence>
<reference key="1">
    <citation type="journal article" date="2020" name="J. Antibiot.">
        <title>Induction of secondary metabolite production by hygromycin B and identification of the 1233A biosynthetic gene cluster with a self-resistance gene.</title>
        <authorList>
            <person name="Kato S."/>
            <person name="Motoyama T."/>
            <person name="Uramoto M."/>
            <person name="Nogawa T."/>
            <person name="Kamakura T."/>
            <person name="Osada H."/>
        </authorList>
    </citation>
    <scope>NUCLEOTIDE SEQUENCE [GENOMIC DNA]</scope>
    <scope>FUNCTION</scope>
    <scope>INDUCTION</scope>
    <scope>DISRUPTION PHENOTYPE</scope>
    <source>
        <strain>RK97-94</strain>
    </source>
</reference>
<organism>
    <name type="scientific">Fusarium sp</name>
    <dbReference type="NCBI Taxonomy" id="29916"/>
    <lineage>
        <taxon>Eukaryota</taxon>
        <taxon>Fungi</taxon>
        <taxon>Dikarya</taxon>
        <taxon>Ascomycota</taxon>
        <taxon>Pezizomycotina</taxon>
        <taxon>Sordariomycetes</taxon>
        <taxon>Hypocreomycetidae</taxon>
        <taxon>Hypocreales</taxon>
        <taxon>Nectriaceae</taxon>
        <taxon>Fusarium</taxon>
    </lineage>
</organism>
<keyword id="KW-0444">Lipid biosynthesis</keyword>
<keyword id="KW-0443">Lipid metabolism</keyword>
<keyword id="KW-0752">Steroid biosynthesis</keyword>
<keyword id="KW-0753">Steroid metabolism</keyword>
<keyword id="KW-0756">Sterol biosynthesis</keyword>
<keyword id="KW-1207">Sterol metabolism</keyword>
<keyword id="KW-0808">Transferase</keyword>
<evidence type="ECO:0000250" key="1">
    <source>
        <dbReference type="UniProtKB" id="P54868"/>
    </source>
</evidence>
<evidence type="ECO:0000250" key="2">
    <source>
        <dbReference type="UniProtKB" id="Q4P3F1"/>
    </source>
</evidence>
<evidence type="ECO:0000255" key="3">
    <source>
        <dbReference type="PROSITE-ProRule" id="PRU10116"/>
    </source>
</evidence>
<evidence type="ECO:0000255" key="4">
    <source>
        <dbReference type="RuleBase" id="RU364071"/>
    </source>
</evidence>
<evidence type="ECO:0000269" key="5">
    <source>
    </source>
</evidence>
<evidence type="ECO:0000303" key="6">
    <source>
    </source>
</evidence>
<evidence type="ECO:0000305" key="7"/>